<comment type="function">
    <text>May be involved in transcriptional regulation.</text>
</comment>
<comment type="interaction">
    <interactant intactId="EBI-2849119">
        <id>Q3KP31</id>
    </interactant>
    <interactant intactId="EBI-747754">
        <id>P28799</id>
        <label>GRN</label>
    </interactant>
    <organismsDiffer>false</organismsDiffer>
    <experiments>3</experiments>
</comment>
<comment type="interaction">
    <interactant intactId="EBI-2849119">
        <id>Q3KP31</id>
    </interactant>
    <interactant intactId="EBI-720609">
        <id>O76024</id>
        <label>WFS1</label>
    </interactant>
    <organismsDiffer>false</organismsDiffer>
    <experiments>3</experiments>
</comment>
<comment type="subcellular location">
    <subcellularLocation>
        <location evidence="4">Nucleus</location>
    </subcellularLocation>
</comment>
<comment type="alternative products">
    <event type="alternative splicing"/>
    <isoform>
        <id>Q3KP31-1</id>
        <name>1</name>
        <sequence type="displayed"/>
    </isoform>
    <isoform>
        <id>Q3KP31-2</id>
        <name>2</name>
        <sequence type="described" ref="VSP_056674"/>
    </isoform>
</comment>
<comment type="similarity">
    <text evidence="4">Belongs to the krueppel C2H2-type zinc-finger protein family.</text>
</comment>
<reference key="1">
    <citation type="journal article" date="2004" name="Nat. Genet.">
        <title>Complete sequencing and characterization of 21,243 full-length human cDNAs.</title>
        <authorList>
            <person name="Ota T."/>
            <person name="Suzuki Y."/>
            <person name="Nishikawa T."/>
            <person name="Otsuki T."/>
            <person name="Sugiyama T."/>
            <person name="Irie R."/>
            <person name="Wakamatsu A."/>
            <person name="Hayashi K."/>
            <person name="Sato H."/>
            <person name="Nagai K."/>
            <person name="Kimura K."/>
            <person name="Makita H."/>
            <person name="Sekine M."/>
            <person name="Obayashi M."/>
            <person name="Nishi T."/>
            <person name="Shibahara T."/>
            <person name="Tanaka T."/>
            <person name="Ishii S."/>
            <person name="Yamamoto J."/>
            <person name="Saito K."/>
            <person name="Kawai Y."/>
            <person name="Isono Y."/>
            <person name="Nakamura Y."/>
            <person name="Nagahari K."/>
            <person name="Murakami K."/>
            <person name="Yasuda T."/>
            <person name="Iwayanagi T."/>
            <person name="Wagatsuma M."/>
            <person name="Shiratori A."/>
            <person name="Sudo H."/>
            <person name="Hosoiri T."/>
            <person name="Kaku Y."/>
            <person name="Kodaira H."/>
            <person name="Kondo H."/>
            <person name="Sugawara M."/>
            <person name="Takahashi M."/>
            <person name="Kanda K."/>
            <person name="Yokoi T."/>
            <person name="Furuya T."/>
            <person name="Kikkawa E."/>
            <person name="Omura Y."/>
            <person name="Abe K."/>
            <person name="Kamihara K."/>
            <person name="Katsuta N."/>
            <person name="Sato K."/>
            <person name="Tanikawa M."/>
            <person name="Yamazaki M."/>
            <person name="Ninomiya K."/>
            <person name="Ishibashi T."/>
            <person name="Yamashita H."/>
            <person name="Murakawa K."/>
            <person name="Fujimori K."/>
            <person name="Tanai H."/>
            <person name="Kimata M."/>
            <person name="Watanabe M."/>
            <person name="Hiraoka S."/>
            <person name="Chiba Y."/>
            <person name="Ishida S."/>
            <person name="Ono Y."/>
            <person name="Takiguchi S."/>
            <person name="Watanabe S."/>
            <person name="Yosida M."/>
            <person name="Hotuta T."/>
            <person name="Kusano J."/>
            <person name="Kanehori K."/>
            <person name="Takahashi-Fujii A."/>
            <person name="Hara H."/>
            <person name="Tanase T.-O."/>
            <person name="Nomura Y."/>
            <person name="Togiya S."/>
            <person name="Komai F."/>
            <person name="Hara R."/>
            <person name="Takeuchi K."/>
            <person name="Arita M."/>
            <person name="Imose N."/>
            <person name="Musashino K."/>
            <person name="Yuuki H."/>
            <person name="Oshima A."/>
            <person name="Sasaki N."/>
            <person name="Aotsuka S."/>
            <person name="Yoshikawa Y."/>
            <person name="Matsunawa H."/>
            <person name="Ichihara T."/>
            <person name="Shiohata N."/>
            <person name="Sano S."/>
            <person name="Moriya S."/>
            <person name="Momiyama H."/>
            <person name="Satoh N."/>
            <person name="Takami S."/>
            <person name="Terashima Y."/>
            <person name="Suzuki O."/>
            <person name="Nakagawa S."/>
            <person name="Senoh A."/>
            <person name="Mizoguchi H."/>
            <person name="Goto Y."/>
            <person name="Shimizu F."/>
            <person name="Wakebe H."/>
            <person name="Hishigaki H."/>
            <person name="Watanabe T."/>
            <person name="Sugiyama A."/>
            <person name="Takemoto M."/>
            <person name="Kawakami B."/>
            <person name="Yamazaki M."/>
            <person name="Watanabe K."/>
            <person name="Kumagai A."/>
            <person name="Itakura S."/>
            <person name="Fukuzumi Y."/>
            <person name="Fujimori Y."/>
            <person name="Komiyama M."/>
            <person name="Tashiro H."/>
            <person name="Tanigami A."/>
            <person name="Fujiwara T."/>
            <person name="Ono T."/>
            <person name="Yamada K."/>
            <person name="Fujii Y."/>
            <person name="Ozaki K."/>
            <person name="Hirao M."/>
            <person name="Ohmori Y."/>
            <person name="Kawabata A."/>
            <person name="Hikiji T."/>
            <person name="Kobatake N."/>
            <person name="Inagaki H."/>
            <person name="Ikema Y."/>
            <person name="Okamoto S."/>
            <person name="Okitani R."/>
            <person name="Kawakami T."/>
            <person name="Noguchi S."/>
            <person name="Itoh T."/>
            <person name="Shigeta K."/>
            <person name="Senba T."/>
            <person name="Matsumura K."/>
            <person name="Nakajima Y."/>
            <person name="Mizuno T."/>
            <person name="Morinaga M."/>
            <person name="Sasaki M."/>
            <person name="Togashi T."/>
            <person name="Oyama M."/>
            <person name="Hata H."/>
            <person name="Watanabe M."/>
            <person name="Komatsu T."/>
            <person name="Mizushima-Sugano J."/>
            <person name="Satoh T."/>
            <person name="Shirai Y."/>
            <person name="Takahashi Y."/>
            <person name="Nakagawa K."/>
            <person name="Okumura K."/>
            <person name="Nagase T."/>
            <person name="Nomura N."/>
            <person name="Kikuchi H."/>
            <person name="Masuho Y."/>
            <person name="Yamashita R."/>
            <person name="Nakai K."/>
            <person name="Yada T."/>
            <person name="Nakamura Y."/>
            <person name="Ohara O."/>
            <person name="Isogai T."/>
            <person name="Sugano S."/>
        </authorList>
    </citation>
    <scope>NUCLEOTIDE SEQUENCE [LARGE SCALE MRNA] (ISOFORMS 1 AND 2)</scope>
    <source>
        <tissue>Teratocarcinoma</tissue>
    </source>
</reference>
<reference key="2">
    <citation type="journal article" date="2004" name="Nature">
        <title>The DNA sequence and biology of human chromosome 19.</title>
        <authorList>
            <person name="Grimwood J."/>
            <person name="Gordon L.A."/>
            <person name="Olsen A.S."/>
            <person name="Terry A."/>
            <person name="Schmutz J."/>
            <person name="Lamerdin J.E."/>
            <person name="Hellsten U."/>
            <person name="Goodstein D."/>
            <person name="Couronne O."/>
            <person name="Tran-Gyamfi M."/>
            <person name="Aerts A."/>
            <person name="Altherr M."/>
            <person name="Ashworth L."/>
            <person name="Bajorek E."/>
            <person name="Black S."/>
            <person name="Branscomb E."/>
            <person name="Caenepeel S."/>
            <person name="Carrano A.V."/>
            <person name="Caoile C."/>
            <person name="Chan Y.M."/>
            <person name="Christensen M."/>
            <person name="Cleland C.A."/>
            <person name="Copeland A."/>
            <person name="Dalin E."/>
            <person name="Dehal P."/>
            <person name="Denys M."/>
            <person name="Detter J.C."/>
            <person name="Escobar J."/>
            <person name="Flowers D."/>
            <person name="Fotopulos D."/>
            <person name="Garcia C."/>
            <person name="Georgescu A.M."/>
            <person name="Glavina T."/>
            <person name="Gomez M."/>
            <person name="Gonzales E."/>
            <person name="Groza M."/>
            <person name="Hammon N."/>
            <person name="Hawkins T."/>
            <person name="Haydu L."/>
            <person name="Ho I."/>
            <person name="Huang W."/>
            <person name="Israni S."/>
            <person name="Jett J."/>
            <person name="Kadner K."/>
            <person name="Kimball H."/>
            <person name="Kobayashi A."/>
            <person name="Larionov V."/>
            <person name="Leem S.-H."/>
            <person name="Lopez F."/>
            <person name="Lou Y."/>
            <person name="Lowry S."/>
            <person name="Malfatti S."/>
            <person name="Martinez D."/>
            <person name="McCready P.M."/>
            <person name="Medina C."/>
            <person name="Morgan J."/>
            <person name="Nelson K."/>
            <person name="Nolan M."/>
            <person name="Ovcharenko I."/>
            <person name="Pitluck S."/>
            <person name="Pollard M."/>
            <person name="Popkie A.P."/>
            <person name="Predki P."/>
            <person name="Quan G."/>
            <person name="Ramirez L."/>
            <person name="Rash S."/>
            <person name="Retterer J."/>
            <person name="Rodriguez A."/>
            <person name="Rogers S."/>
            <person name="Salamov A."/>
            <person name="Salazar A."/>
            <person name="She X."/>
            <person name="Smith D."/>
            <person name="Slezak T."/>
            <person name="Solovyev V."/>
            <person name="Thayer N."/>
            <person name="Tice H."/>
            <person name="Tsai M."/>
            <person name="Ustaszewska A."/>
            <person name="Vo N."/>
            <person name="Wagner M."/>
            <person name="Wheeler J."/>
            <person name="Wu K."/>
            <person name="Xie G."/>
            <person name="Yang J."/>
            <person name="Dubchak I."/>
            <person name="Furey T.S."/>
            <person name="DeJong P."/>
            <person name="Dickson M."/>
            <person name="Gordon D."/>
            <person name="Eichler E.E."/>
            <person name="Pennacchio L.A."/>
            <person name="Richardson P."/>
            <person name="Stubbs L."/>
            <person name="Rokhsar D.S."/>
            <person name="Myers R.M."/>
            <person name="Rubin E.M."/>
            <person name="Lucas S.M."/>
        </authorList>
    </citation>
    <scope>NUCLEOTIDE SEQUENCE [LARGE SCALE GENOMIC DNA]</scope>
</reference>
<reference key="3">
    <citation type="submission" date="2005-07" db="EMBL/GenBank/DDBJ databases">
        <authorList>
            <person name="Mural R.J."/>
            <person name="Istrail S."/>
            <person name="Sutton G.G."/>
            <person name="Florea L."/>
            <person name="Halpern A.L."/>
            <person name="Mobarry C.M."/>
            <person name="Lippert R."/>
            <person name="Walenz B."/>
            <person name="Shatkay H."/>
            <person name="Dew I."/>
            <person name="Miller J.R."/>
            <person name="Flanigan M.J."/>
            <person name="Edwards N.J."/>
            <person name="Bolanos R."/>
            <person name="Fasulo D."/>
            <person name="Halldorsson B.V."/>
            <person name="Hannenhalli S."/>
            <person name="Turner R."/>
            <person name="Yooseph S."/>
            <person name="Lu F."/>
            <person name="Nusskern D.R."/>
            <person name="Shue B.C."/>
            <person name="Zheng X.H."/>
            <person name="Zhong F."/>
            <person name="Delcher A.L."/>
            <person name="Huson D.H."/>
            <person name="Kravitz S.A."/>
            <person name="Mouchard L."/>
            <person name="Reinert K."/>
            <person name="Remington K.A."/>
            <person name="Clark A.G."/>
            <person name="Waterman M.S."/>
            <person name="Eichler E.E."/>
            <person name="Adams M.D."/>
            <person name="Hunkapiller M.W."/>
            <person name="Myers E.W."/>
            <person name="Venter J.C."/>
        </authorList>
    </citation>
    <scope>NUCLEOTIDE SEQUENCE [LARGE SCALE GENOMIC DNA]</scope>
</reference>
<reference key="4">
    <citation type="journal article" date="2004" name="Genome Res.">
        <title>The status, quality, and expansion of the NIH full-length cDNA project: the Mammalian Gene Collection (MGC).</title>
        <authorList>
            <consortium name="The MGC Project Team"/>
        </authorList>
    </citation>
    <scope>NUCLEOTIDE SEQUENCE [LARGE SCALE MRNA] (ISOFORM 1)</scope>
</reference>
<evidence type="ECO:0000255" key="1">
    <source>
        <dbReference type="PROSITE-ProRule" id="PRU00042"/>
    </source>
</evidence>
<evidence type="ECO:0000255" key="2">
    <source>
        <dbReference type="PROSITE-ProRule" id="PRU00119"/>
    </source>
</evidence>
<evidence type="ECO:0000303" key="3">
    <source>
    </source>
</evidence>
<evidence type="ECO:0000305" key="4"/>
<sequence length="576" mass="66872">MDSVAFEDVSVSFSQEEWALLAPSQKKLYRDVMQETFKNLASIGEKWEDPNVEDQHKNQGRNLRSHTGERLCEGKEGSQCAENFSPNLSVTKKTAGVKPYECTICGKAFMRLSSLTRHMRSHTGYELFEKPYKCKECEKAFSYLKSFQRHERSHTGEKPYKCKQCGKTFIYHQPFQRHERTHIGEKPYECKQCGKALSCSSSLRVHERIHTGEKPYECKQCGKAFSCSSSIRVHERTHTGEKPYACKECGKAFISHTSVLTHMITHNGDRPYKCKECGKAFIFPSFLRVHERIHTGEKPYKCKQCGKAFRCSTSIQIHERIHTGEKPYKCKECGKSFSARPAFRVHVRVHTGEKPYKCKECGKAFSRISYFRIHERTHTGEKPYECKKCGKTFNYPLDLKIHKRNHTGEKPYECKECAKTFISLENFRRHMITHTGDGPYKCRDCGKVFIFPSALRTHERTHTGEKPYECKQCGKAFSCSSYIRIHKRTHTGEKPYECKECGKAFIYPTSFQGHMRMHTGEKPYKCKECGKAFSLHSSFQRHTRIHNYEKPLECKQCGKAFSVSTSLKKHMRMHNR</sequence>
<organism>
    <name type="scientific">Homo sapiens</name>
    <name type="common">Human</name>
    <dbReference type="NCBI Taxonomy" id="9606"/>
    <lineage>
        <taxon>Eukaryota</taxon>
        <taxon>Metazoa</taxon>
        <taxon>Chordata</taxon>
        <taxon>Craniata</taxon>
        <taxon>Vertebrata</taxon>
        <taxon>Euteleostomi</taxon>
        <taxon>Mammalia</taxon>
        <taxon>Eutheria</taxon>
        <taxon>Euarchontoglires</taxon>
        <taxon>Primates</taxon>
        <taxon>Haplorrhini</taxon>
        <taxon>Catarrhini</taxon>
        <taxon>Hominidae</taxon>
        <taxon>Homo</taxon>
    </lineage>
</organism>
<protein>
    <recommendedName>
        <fullName>Zinc finger protein 791</fullName>
    </recommendedName>
</protein>
<proteinExistence type="evidence at protein level"/>
<gene>
    <name type="primary">ZNF791</name>
</gene>
<accession>Q3KP31</accession>
<accession>B7Z586</accession>
<accession>Q8NC99</accession>
<name>ZN791_HUMAN</name>
<feature type="chain" id="PRO_0000311799" description="Zinc finger protein 791">
    <location>
        <begin position="1"/>
        <end position="576"/>
    </location>
</feature>
<feature type="domain" description="KRAB" evidence="2">
    <location>
        <begin position="4"/>
        <end position="90"/>
    </location>
</feature>
<feature type="zinc finger region" description="C2H2-type 1" evidence="1">
    <location>
        <begin position="100"/>
        <end position="122"/>
    </location>
</feature>
<feature type="zinc finger region" description="C2H2-type 2" evidence="1">
    <location>
        <begin position="132"/>
        <end position="154"/>
    </location>
</feature>
<feature type="zinc finger region" description="C2H2-type 3" evidence="1">
    <location>
        <begin position="160"/>
        <end position="182"/>
    </location>
</feature>
<feature type="zinc finger region" description="C2H2-type 4" evidence="1">
    <location>
        <begin position="188"/>
        <end position="210"/>
    </location>
</feature>
<feature type="zinc finger region" description="C2H2-type 5" evidence="1">
    <location>
        <begin position="216"/>
        <end position="238"/>
    </location>
</feature>
<feature type="zinc finger region" description="C2H2-type 6" evidence="1">
    <location>
        <begin position="244"/>
        <end position="266"/>
    </location>
</feature>
<feature type="zinc finger region" description="C2H2-type 7" evidence="1">
    <location>
        <begin position="272"/>
        <end position="294"/>
    </location>
</feature>
<feature type="zinc finger region" description="C2H2-type 8" evidence="1">
    <location>
        <begin position="300"/>
        <end position="322"/>
    </location>
</feature>
<feature type="zinc finger region" description="C2H2-type 9" evidence="1">
    <location>
        <begin position="328"/>
        <end position="350"/>
    </location>
</feature>
<feature type="zinc finger region" description="C2H2-type 10" evidence="1">
    <location>
        <begin position="356"/>
        <end position="378"/>
    </location>
</feature>
<feature type="zinc finger region" description="C2H2-type 11" evidence="1">
    <location>
        <begin position="384"/>
        <end position="406"/>
    </location>
</feature>
<feature type="zinc finger region" description="C2H2-type 12" evidence="1">
    <location>
        <begin position="412"/>
        <end position="434"/>
    </location>
</feature>
<feature type="zinc finger region" description="C2H2-type 13" evidence="1">
    <location>
        <begin position="440"/>
        <end position="462"/>
    </location>
</feature>
<feature type="zinc finger region" description="C2H2-type 14" evidence="1">
    <location>
        <begin position="468"/>
        <end position="490"/>
    </location>
</feature>
<feature type="zinc finger region" description="C2H2-type 15" evidence="1">
    <location>
        <begin position="496"/>
        <end position="518"/>
    </location>
</feature>
<feature type="zinc finger region" description="C2H2-type 16" evidence="1">
    <location>
        <begin position="524"/>
        <end position="546"/>
    </location>
</feature>
<feature type="zinc finger region" description="C2H2-type 17" evidence="1">
    <location>
        <begin position="552"/>
        <end position="574"/>
    </location>
</feature>
<feature type="splice variant" id="VSP_056674" description="In isoform 2." evidence="3">
    <location>
        <begin position="1"/>
        <end position="32"/>
    </location>
</feature>
<feature type="sequence conflict" description="In Ref. 1; BAC11261." evidence="4" ref="1">
    <original>R</original>
    <variation>S</variation>
    <location>
        <position position="177"/>
    </location>
</feature>
<dbReference type="EMBL" id="AK074877">
    <property type="protein sequence ID" value="BAC11261.1"/>
    <property type="molecule type" value="mRNA"/>
</dbReference>
<dbReference type="EMBL" id="AK298597">
    <property type="protein sequence ID" value="BAH12822.1"/>
    <property type="molecule type" value="mRNA"/>
</dbReference>
<dbReference type="EMBL" id="CH471106">
    <property type="protein sequence ID" value="EAW84278.1"/>
    <property type="molecule type" value="Genomic_DNA"/>
</dbReference>
<dbReference type="EMBL" id="BC106937">
    <property type="protein sequence ID" value="AAI06938.1"/>
    <property type="molecule type" value="mRNA"/>
</dbReference>
<dbReference type="EMBL" id="BC106938">
    <property type="protein sequence ID" value="AAI06939.1"/>
    <property type="molecule type" value="mRNA"/>
</dbReference>
<dbReference type="CCDS" id="CCDS12273.1">
    <molecule id="Q3KP31-1"/>
</dbReference>
<dbReference type="RefSeq" id="NP_699189.2">
    <molecule id="Q3KP31-1"/>
    <property type="nucleotide sequence ID" value="NM_153358.3"/>
</dbReference>
<dbReference type="RefSeq" id="XP_016881901.1">
    <property type="nucleotide sequence ID" value="XM_017026412.1"/>
</dbReference>
<dbReference type="SMR" id="Q3KP31"/>
<dbReference type="BioGRID" id="127843">
    <property type="interactions" value="24"/>
</dbReference>
<dbReference type="FunCoup" id="Q3KP31">
    <property type="interactions" value="1112"/>
</dbReference>
<dbReference type="IntAct" id="Q3KP31">
    <property type="interactions" value="22"/>
</dbReference>
<dbReference type="STRING" id="9606.ENSP00000342974"/>
<dbReference type="iPTMnet" id="Q3KP31"/>
<dbReference type="PhosphoSitePlus" id="Q3KP31"/>
<dbReference type="BioMuta" id="ZNF791"/>
<dbReference type="DMDM" id="121942546"/>
<dbReference type="jPOST" id="Q3KP31"/>
<dbReference type="MassIVE" id="Q3KP31"/>
<dbReference type="PaxDb" id="9606-ENSP00000342974"/>
<dbReference type="PeptideAtlas" id="Q3KP31"/>
<dbReference type="ProteomicsDB" id="61711">
    <molecule id="Q3KP31-1"/>
</dbReference>
<dbReference type="ProteomicsDB" id="6665"/>
<dbReference type="Antibodypedia" id="26057">
    <property type="antibodies" value="90 antibodies from 16 providers"/>
</dbReference>
<dbReference type="DNASU" id="163049"/>
<dbReference type="Ensembl" id="ENST00000343325.9">
    <molecule id="Q3KP31-1"/>
    <property type="protein sequence ID" value="ENSP00000342974.4"/>
    <property type="gene ID" value="ENSG00000173875.14"/>
</dbReference>
<dbReference type="GeneID" id="163049"/>
<dbReference type="KEGG" id="hsa:163049"/>
<dbReference type="MANE-Select" id="ENST00000343325.9">
    <property type="protein sequence ID" value="ENSP00000342974.4"/>
    <property type="RefSeq nucleotide sequence ID" value="NM_153358.3"/>
    <property type="RefSeq protein sequence ID" value="NP_699189.2"/>
</dbReference>
<dbReference type="UCSC" id="uc002mua.3">
    <molecule id="Q3KP31-1"/>
    <property type="organism name" value="human"/>
</dbReference>
<dbReference type="AGR" id="HGNC:26895"/>
<dbReference type="CTD" id="163049"/>
<dbReference type="DisGeNET" id="163049"/>
<dbReference type="GeneCards" id="ZNF791"/>
<dbReference type="HGNC" id="HGNC:26895">
    <property type="gene designation" value="ZNF791"/>
</dbReference>
<dbReference type="HPA" id="ENSG00000173875">
    <property type="expression patterns" value="Low tissue specificity"/>
</dbReference>
<dbReference type="neXtProt" id="NX_Q3KP31"/>
<dbReference type="OpenTargets" id="ENSG00000173875"/>
<dbReference type="PharmGKB" id="PA162410522"/>
<dbReference type="VEuPathDB" id="HostDB:ENSG00000173875"/>
<dbReference type="eggNOG" id="KOG1721">
    <property type="taxonomic scope" value="Eukaryota"/>
</dbReference>
<dbReference type="GeneTree" id="ENSGT00950000182755"/>
<dbReference type="HOGENOM" id="CLU_002678_44_17_1"/>
<dbReference type="InParanoid" id="Q3KP31"/>
<dbReference type="OMA" id="TSVQTHM"/>
<dbReference type="OrthoDB" id="1095242at2759"/>
<dbReference type="PAN-GO" id="Q3KP31">
    <property type="GO annotations" value="4 GO annotations based on evolutionary models"/>
</dbReference>
<dbReference type="PhylomeDB" id="Q3KP31"/>
<dbReference type="TreeFam" id="TF338854"/>
<dbReference type="PathwayCommons" id="Q3KP31"/>
<dbReference type="Reactome" id="R-HSA-212436">
    <property type="pathway name" value="Generic Transcription Pathway"/>
</dbReference>
<dbReference type="SignaLink" id="Q3KP31"/>
<dbReference type="BioGRID-ORCS" id="163049">
    <property type="hits" value="14 hits in 1176 CRISPR screens"/>
</dbReference>
<dbReference type="ChiTaRS" id="ZNF791">
    <property type="organism name" value="human"/>
</dbReference>
<dbReference type="GenomeRNAi" id="163049"/>
<dbReference type="Pharos" id="Q3KP31">
    <property type="development level" value="Tdark"/>
</dbReference>
<dbReference type="PRO" id="PR:Q3KP31"/>
<dbReference type="Proteomes" id="UP000005640">
    <property type="component" value="Chromosome 19"/>
</dbReference>
<dbReference type="RNAct" id="Q3KP31">
    <property type="molecule type" value="protein"/>
</dbReference>
<dbReference type="Bgee" id="ENSG00000173875">
    <property type="expression patterns" value="Expressed in nipple and 193 other cell types or tissues"/>
</dbReference>
<dbReference type="ExpressionAtlas" id="Q3KP31">
    <property type="expression patterns" value="baseline and differential"/>
</dbReference>
<dbReference type="GO" id="GO:0005634">
    <property type="term" value="C:nucleus"/>
    <property type="evidence" value="ECO:0000318"/>
    <property type="project" value="GO_Central"/>
</dbReference>
<dbReference type="GO" id="GO:0000981">
    <property type="term" value="F:DNA-binding transcription factor activity, RNA polymerase II-specific"/>
    <property type="evidence" value="ECO:0000318"/>
    <property type="project" value="GO_Central"/>
</dbReference>
<dbReference type="GO" id="GO:0000977">
    <property type="term" value="F:RNA polymerase II transcription regulatory region sequence-specific DNA binding"/>
    <property type="evidence" value="ECO:0000318"/>
    <property type="project" value="GO_Central"/>
</dbReference>
<dbReference type="GO" id="GO:0008270">
    <property type="term" value="F:zinc ion binding"/>
    <property type="evidence" value="ECO:0007669"/>
    <property type="project" value="UniProtKB-KW"/>
</dbReference>
<dbReference type="GO" id="GO:0006357">
    <property type="term" value="P:regulation of transcription by RNA polymerase II"/>
    <property type="evidence" value="ECO:0000318"/>
    <property type="project" value="GO_Central"/>
</dbReference>
<dbReference type="CDD" id="cd07765">
    <property type="entry name" value="KRAB_A-box"/>
    <property type="match status" value="1"/>
</dbReference>
<dbReference type="FunFam" id="3.30.160.60:FF:000838">
    <property type="entry name" value="Zinc finger protein 14"/>
    <property type="match status" value="2"/>
</dbReference>
<dbReference type="FunFam" id="3.30.160.60:FF:000193">
    <property type="entry name" value="Zinc finger protein 300"/>
    <property type="match status" value="1"/>
</dbReference>
<dbReference type="FunFam" id="3.30.160.60:FF:000184">
    <property type="entry name" value="Zinc finger protein 333"/>
    <property type="match status" value="2"/>
</dbReference>
<dbReference type="FunFam" id="3.30.160.60:FF:002343">
    <property type="entry name" value="Zinc finger protein 33A"/>
    <property type="match status" value="1"/>
</dbReference>
<dbReference type="FunFam" id="3.30.160.60:FF:001505">
    <property type="entry name" value="Zinc finger protein 540"/>
    <property type="match status" value="1"/>
</dbReference>
<dbReference type="FunFam" id="3.30.160.60:FF:002254">
    <property type="entry name" value="Zinc finger protein 540"/>
    <property type="match status" value="1"/>
</dbReference>
<dbReference type="FunFam" id="3.30.160.60:FF:000371">
    <property type="entry name" value="Zinc finger protein 555"/>
    <property type="match status" value="1"/>
</dbReference>
<dbReference type="FunFam" id="3.30.160.60:FF:000156">
    <property type="entry name" value="Zinc finger protein 568"/>
    <property type="match status" value="5"/>
</dbReference>
<dbReference type="FunFam" id="3.30.160.60:FF:000350">
    <property type="entry name" value="Zinc finger protein 699"/>
    <property type="match status" value="1"/>
</dbReference>
<dbReference type="FunFam" id="3.30.160.60:FF:000493">
    <property type="entry name" value="Zinc finger protein 805"/>
    <property type="match status" value="1"/>
</dbReference>
<dbReference type="FunFam" id="3.30.160.60:FF:001933">
    <property type="entry name" value="Zinc finger protein 870"/>
    <property type="match status" value="1"/>
</dbReference>
<dbReference type="Gene3D" id="6.10.140.140">
    <property type="match status" value="1"/>
</dbReference>
<dbReference type="Gene3D" id="3.30.160.60">
    <property type="entry name" value="Classic Zinc Finger"/>
    <property type="match status" value="17"/>
</dbReference>
<dbReference type="InterPro" id="IPR050589">
    <property type="entry name" value="Ikaros_C2H2-ZF"/>
</dbReference>
<dbReference type="InterPro" id="IPR001909">
    <property type="entry name" value="KRAB"/>
</dbReference>
<dbReference type="InterPro" id="IPR036051">
    <property type="entry name" value="KRAB_dom_sf"/>
</dbReference>
<dbReference type="InterPro" id="IPR036236">
    <property type="entry name" value="Znf_C2H2_sf"/>
</dbReference>
<dbReference type="InterPro" id="IPR013087">
    <property type="entry name" value="Znf_C2H2_type"/>
</dbReference>
<dbReference type="PANTHER" id="PTHR24404">
    <property type="entry name" value="ZINC FINGER PROTEIN"/>
    <property type="match status" value="1"/>
</dbReference>
<dbReference type="PANTHER" id="PTHR24404:SF10">
    <property type="entry name" value="ZINC FINGER PROTEIN 564"/>
    <property type="match status" value="1"/>
</dbReference>
<dbReference type="Pfam" id="PF01352">
    <property type="entry name" value="KRAB"/>
    <property type="match status" value="1"/>
</dbReference>
<dbReference type="Pfam" id="PF00096">
    <property type="entry name" value="zf-C2H2"/>
    <property type="match status" value="14"/>
</dbReference>
<dbReference type="SMART" id="SM00349">
    <property type="entry name" value="KRAB"/>
    <property type="match status" value="1"/>
</dbReference>
<dbReference type="SMART" id="SM00355">
    <property type="entry name" value="ZnF_C2H2"/>
    <property type="match status" value="17"/>
</dbReference>
<dbReference type="SUPFAM" id="SSF57667">
    <property type="entry name" value="beta-beta-alpha zinc fingers"/>
    <property type="match status" value="10"/>
</dbReference>
<dbReference type="SUPFAM" id="SSF109640">
    <property type="entry name" value="KRAB domain (Kruppel-associated box)"/>
    <property type="match status" value="1"/>
</dbReference>
<dbReference type="PROSITE" id="PS50805">
    <property type="entry name" value="KRAB"/>
    <property type="match status" value="1"/>
</dbReference>
<dbReference type="PROSITE" id="PS00028">
    <property type="entry name" value="ZINC_FINGER_C2H2_1"/>
    <property type="match status" value="17"/>
</dbReference>
<dbReference type="PROSITE" id="PS50157">
    <property type="entry name" value="ZINC_FINGER_C2H2_2"/>
    <property type="match status" value="17"/>
</dbReference>
<keyword id="KW-0025">Alternative splicing</keyword>
<keyword id="KW-0238">DNA-binding</keyword>
<keyword id="KW-0479">Metal-binding</keyword>
<keyword id="KW-0539">Nucleus</keyword>
<keyword id="KW-1267">Proteomics identification</keyword>
<keyword id="KW-1185">Reference proteome</keyword>
<keyword id="KW-0677">Repeat</keyword>
<keyword id="KW-0804">Transcription</keyword>
<keyword id="KW-0805">Transcription regulation</keyword>
<keyword id="KW-0862">Zinc</keyword>
<keyword id="KW-0863">Zinc-finger</keyword>